<dbReference type="EC" id="2.4.1.227" evidence="1"/>
<dbReference type="EMBL" id="CP000030">
    <property type="protein sequence ID" value="AAV86508.1"/>
    <property type="status" value="ALT_INIT"/>
    <property type="molecule type" value="Genomic_DNA"/>
</dbReference>
<dbReference type="RefSeq" id="WP_037330983.1">
    <property type="nucleotide sequence ID" value="NC_004842.2"/>
</dbReference>
<dbReference type="SMR" id="Q5PB22"/>
<dbReference type="CAZy" id="GT28">
    <property type="family name" value="Glycosyltransferase Family 28"/>
</dbReference>
<dbReference type="KEGG" id="ama:AM471"/>
<dbReference type="HOGENOM" id="CLU_037404_2_1_5"/>
<dbReference type="UniPathway" id="UPA00219"/>
<dbReference type="GO" id="GO:0005886">
    <property type="term" value="C:plasma membrane"/>
    <property type="evidence" value="ECO:0007669"/>
    <property type="project" value="UniProtKB-SubCell"/>
</dbReference>
<dbReference type="GO" id="GO:0051991">
    <property type="term" value="F:UDP-N-acetyl-D-glucosamine:N-acetylmuramoyl-L-alanyl-D-glutamyl-meso-2,6-diaminopimelyl-D-alanyl-D-alanine-diphosphoundecaprenol 4-beta-N-acetylglucosaminlytransferase activity"/>
    <property type="evidence" value="ECO:0007669"/>
    <property type="project" value="RHEA"/>
</dbReference>
<dbReference type="GO" id="GO:0050511">
    <property type="term" value="F:undecaprenyldiphospho-muramoylpentapeptide beta-N-acetylglucosaminyltransferase activity"/>
    <property type="evidence" value="ECO:0007669"/>
    <property type="project" value="UniProtKB-UniRule"/>
</dbReference>
<dbReference type="GO" id="GO:0005975">
    <property type="term" value="P:carbohydrate metabolic process"/>
    <property type="evidence" value="ECO:0007669"/>
    <property type="project" value="InterPro"/>
</dbReference>
<dbReference type="GO" id="GO:0051301">
    <property type="term" value="P:cell division"/>
    <property type="evidence" value="ECO:0007669"/>
    <property type="project" value="UniProtKB-KW"/>
</dbReference>
<dbReference type="GO" id="GO:0071555">
    <property type="term" value="P:cell wall organization"/>
    <property type="evidence" value="ECO:0007669"/>
    <property type="project" value="UniProtKB-KW"/>
</dbReference>
<dbReference type="GO" id="GO:0030259">
    <property type="term" value="P:lipid glycosylation"/>
    <property type="evidence" value="ECO:0007669"/>
    <property type="project" value="UniProtKB-UniRule"/>
</dbReference>
<dbReference type="GO" id="GO:0009252">
    <property type="term" value="P:peptidoglycan biosynthetic process"/>
    <property type="evidence" value="ECO:0007669"/>
    <property type="project" value="UniProtKB-UniRule"/>
</dbReference>
<dbReference type="GO" id="GO:0008360">
    <property type="term" value="P:regulation of cell shape"/>
    <property type="evidence" value="ECO:0007669"/>
    <property type="project" value="UniProtKB-KW"/>
</dbReference>
<dbReference type="CDD" id="cd03785">
    <property type="entry name" value="GT28_MurG"/>
    <property type="match status" value="1"/>
</dbReference>
<dbReference type="Gene3D" id="3.40.50.2000">
    <property type="entry name" value="Glycogen Phosphorylase B"/>
    <property type="match status" value="2"/>
</dbReference>
<dbReference type="HAMAP" id="MF_00033">
    <property type="entry name" value="MurG"/>
    <property type="match status" value="1"/>
</dbReference>
<dbReference type="InterPro" id="IPR006009">
    <property type="entry name" value="GlcNAc_MurG"/>
</dbReference>
<dbReference type="InterPro" id="IPR007235">
    <property type="entry name" value="Glyco_trans_28_C"/>
</dbReference>
<dbReference type="InterPro" id="IPR004276">
    <property type="entry name" value="GlycoTrans_28_N"/>
</dbReference>
<dbReference type="PANTHER" id="PTHR21015:SF22">
    <property type="entry name" value="GLYCOSYLTRANSFERASE"/>
    <property type="match status" value="1"/>
</dbReference>
<dbReference type="PANTHER" id="PTHR21015">
    <property type="entry name" value="UDP-N-ACETYLGLUCOSAMINE--N-ACETYLMURAMYL-(PENTAPEPTIDE) PYROPHOSPHORYL-UNDECAPRENOL N-ACETYLGLUCOSAMINE TRANSFERASE 1"/>
    <property type="match status" value="1"/>
</dbReference>
<dbReference type="Pfam" id="PF04101">
    <property type="entry name" value="Glyco_tran_28_C"/>
    <property type="match status" value="1"/>
</dbReference>
<dbReference type="Pfam" id="PF03033">
    <property type="entry name" value="Glyco_transf_28"/>
    <property type="match status" value="1"/>
</dbReference>
<dbReference type="SUPFAM" id="SSF53756">
    <property type="entry name" value="UDP-Glycosyltransferase/glycogen phosphorylase"/>
    <property type="match status" value="1"/>
</dbReference>
<comment type="function">
    <text evidence="1">Cell wall formation. Catalyzes the transfer of a GlcNAc subunit on undecaprenyl-pyrophosphoryl-MurNAc-pentapeptide (lipid intermediate I) to form undecaprenyl-pyrophosphoryl-MurNAc-(pentapeptide)GlcNAc (lipid intermediate II).</text>
</comment>
<comment type="catalytic activity">
    <reaction evidence="1">
        <text>di-trans,octa-cis-undecaprenyl diphospho-N-acetyl-alpha-D-muramoyl-L-alanyl-D-glutamyl-meso-2,6-diaminopimeloyl-D-alanyl-D-alanine + UDP-N-acetyl-alpha-D-glucosamine = di-trans,octa-cis-undecaprenyl diphospho-[N-acetyl-alpha-D-glucosaminyl-(1-&gt;4)]-N-acetyl-alpha-D-muramoyl-L-alanyl-D-glutamyl-meso-2,6-diaminopimeloyl-D-alanyl-D-alanine + UDP + H(+)</text>
        <dbReference type="Rhea" id="RHEA:31227"/>
        <dbReference type="ChEBI" id="CHEBI:15378"/>
        <dbReference type="ChEBI" id="CHEBI:57705"/>
        <dbReference type="ChEBI" id="CHEBI:58223"/>
        <dbReference type="ChEBI" id="CHEBI:61387"/>
        <dbReference type="ChEBI" id="CHEBI:61388"/>
        <dbReference type="EC" id="2.4.1.227"/>
    </reaction>
</comment>
<comment type="pathway">
    <text evidence="1">Cell wall biogenesis; peptidoglycan biosynthesis.</text>
</comment>
<comment type="subcellular location">
    <subcellularLocation>
        <location evidence="1">Cell inner membrane</location>
        <topology evidence="1">Peripheral membrane protein</topology>
        <orientation evidence="1">Cytoplasmic side</orientation>
    </subcellularLocation>
</comment>
<comment type="similarity">
    <text evidence="1">Belongs to the glycosyltransferase 28 family. MurG subfamily.</text>
</comment>
<comment type="sequence caution" evidence="2">
    <conflict type="erroneous initiation">
        <sequence resource="EMBL-CDS" id="AAV86508"/>
    </conflict>
</comment>
<feature type="chain" id="PRO_0000315063" description="UDP-N-acetylglucosamine--N-acetylmuramyl-(pentapeptide) pyrophosphoryl-undecaprenol N-acetylglucosamine transferase">
    <location>
        <begin position="1"/>
        <end position="356"/>
    </location>
</feature>
<feature type="binding site" evidence="1">
    <location>
        <begin position="11"/>
        <end position="13"/>
    </location>
    <ligand>
        <name>UDP-N-acetyl-alpha-D-glucosamine</name>
        <dbReference type="ChEBI" id="CHEBI:57705"/>
    </ligand>
</feature>
<feature type="binding site" evidence="1">
    <location>
        <position position="122"/>
    </location>
    <ligand>
        <name>UDP-N-acetyl-alpha-D-glucosamine</name>
        <dbReference type="ChEBI" id="CHEBI:57705"/>
    </ligand>
</feature>
<feature type="binding site" evidence="1">
    <location>
        <position position="186"/>
    </location>
    <ligand>
        <name>UDP-N-acetyl-alpha-D-glucosamine</name>
        <dbReference type="ChEBI" id="CHEBI:57705"/>
    </ligand>
</feature>
<feature type="binding site" evidence="1">
    <location>
        <position position="287"/>
    </location>
    <ligand>
        <name>UDP-N-acetyl-alpha-D-glucosamine</name>
        <dbReference type="ChEBI" id="CHEBI:57705"/>
    </ligand>
</feature>
<organism>
    <name type="scientific">Anaplasma marginale (strain St. Maries)</name>
    <dbReference type="NCBI Taxonomy" id="234826"/>
    <lineage>
        <taxon>Bacteria</taxon>
        <taxon>Pseudomonadati</taxon>
        <taxon>Pseudomonadota</taxon>
        <taxon>Alphaproteobacteria</taxon>
        <taxon>Rickettsiales</taxon>
        <taxon>Anaplasmataceae</taxon>
        <taxon>Anaplasma</taxon>
    </lineage>
</organism>
<name>MURG_ANAMM</name>
<evidence type="ECO:0000255" key="1">
    <source>
        <dbReference type="HAMAP-Rule" id="MF_00033"/>
    </source>
</evidence>
<evidence type="ECO:0000305" key="2"/>
<reference key="1">
    <citation type="journal article" date="2005" name="Proc. Natl. Acad. Sci. U.S.A.">
        <title>Complete genome sequencing of Anaplasma marginale reveals that the surface is skewed to two superfamilies of outer membrane proteins.</title>
        <authorList>
            <person name="Brayton K.A."/>
            <person name="Kappmeyer L.S."/>
            <person name="Herndon D.R."/>
            <person name="Dark M.J."/>
            <person name="Tibbals D.L."/>
            <person name="Palmer G.H."/>
            <person name="McGuire T.C."/>
            <person name="Knowles D.P. Jr."/>
        </authorList>
    </citation>
    <scope>NUCLEOTIDE SEQUENCE [LARGE SCALE GENOMIC DNA]</scope>
    <source>
        <strain>St. Maries</strain>
    </source>
</reference>
<keyword id="KW-0131">Cell cycle</keyword>
<keyword id="KW-0132">Cell division</keyword>
<keyword id="KW-0997">Cell inner membrane</keyword>
<keyword id="KW-1003">Cell membrane</keyword>
<keyword id="KW-0133">Cell shape</keyword>
<keyword id="KW-0961">Cell wall biogenesis/degradation</keyword>
<keyword id="KW-0328">Glycosyltransferase</keyword>
<keyword id="KW-0472">Membrane</keyword>
<keyword id="KW-0573">Peptidoglycan synthesis</keyword>
<keyword id="KW-0808">Transferase</keyword>
<proteinExistence type="inferred from homology"/>
<gene>
    <name evidence="1" type="primary">murG</name>
    <name type="ordered locus">AM471</name>
</gene>
<accession>Q5PB22</accession>
<protein>
    <recommendedName>
        <fullName evidence="1">UDP-N-acetylglucosamine--N-acetylmuramyl-(pentapeptide) pyrophosphoryl-undecaprenol N-acetylglucosamine transferase</fullName>
        <ecNumber evidence="1">2.4.1.227</ecNumber>
    </recommendedName>
    <alternativeName>
        <fullName evidence="1">Undecaprenyl-PP-MurNAc-pentapeptide-UDPGlcNAc GlcNAc transferase</fullName>
    </alternativeName>
</protein>
<sequence>MKKVVLAAGGTGGHIVPAALLCQVLADRGYRCVLYTDQYFLQYTARFPGIKGYVLLPLCKRSGGAVRLLKFCALLAYSCVLSYIKLRSLKPDLVIGFGAYASFPVLLSAWLMSVDAVLHEQNSVMGRVNRVFAGYARVIACGLPLRTVGNKLAHKVAHVGVPTDVKKAVKRPLAGDSINLVILGGSQGLCTFGKTFALAIAELPTNIRGRVFVTQQCGKGQLEVITELYARHGIKHKLSGFFTDMQNIIGEADLIISRAGATTIAEVMAAGRPAIYVPYERSSCSHQLYNAQLIESLGAGLCIEERTLDVSSARDALTNLLGDRNKLQEMSCNAAKHAMPDADAQFCAIVDGLLKG</sequence>